<protein>
    <recommendedName>
        <fullName evidence="1">Ribosomal RNA large subunit methyltransferase M</fullName>
        <ecNumber evidence="1">2.1.1.186</ecNumber>
    </recommendedName>
    <alternativeName>
        <fullName evidence="1">23S rRNA (cytidine2498-2'-O)-methyltransferase</fullName>
    </alternativeName>
    <alternativeName>
        <fullName evidence="1">23S rRNA 2'-O-ribose methyltransferase RlmM</fullName>
    </alternativeName>
</protein>
<dbReference type="EC" id="2.1.1.186" evidence="1"/>
<dbReference type="EMBL" id="CP000036">
    <property type="protein sequence ID" value="ABB67223.1"/>
    <property type="molecule type" value="Genomic_DNA"/>
</dbReference>
<dbReference type="RefSeq" id="WP_001045538.1">
    <property type="nucleotide sequence ID" value="NC_007613.1"/>
</dbReference>
<dbReference type="SMR" id="Q31XI5"/>
<dbReference type="KEGG" id="sbo:SBO_2689"/>
<dbReference type="HOGENOM" id="CLU_043780_0_0_6"/>
<dbReference type="Proteomes" id="UP000007067">
    <property type="component" value="Chromosome"/>
</dbReference>
<dbReference type="GO" id="GO:0005737">
    <property type="term" value="C:cytoplasm"/>
    <property type="evidence" value="ECO:0007669"/>
    <property type="project" value="UniProtKB-SubCell"/>
</dbReference>
<dbReference type="GO" id="GO:0008757">
    <property type="term" value="F:S-adenosylmethionine-dependent methyltransferase activity"/>
    <property type="evidence" value="ECO:0007669"/>
    <property type="project" value="UniProtKB-UniRule"/>
</dbReference>
<dbReference type="GO" id="GO:0032259">
    <property type="term" value="P:methylation"/>
    <property type="evidence" value="ECO:0007669"/>
    <property type="project" value="UniProtKB-KW"/>
</dbReference>
<dbReference type="GO" id="GO:0006364">
    <property type="term" value="P:rRNA processing"/>
    <property type="evidence" value="ECO:0007669"/>
    <property type="project" value="UniProtKB-UniRule"/>
</dbReference>
<dbReference type="FunFam" id="3.30.2300.20:FF:000001">
    <property type="entry name" value="Ribosomal RNA large subunit methyltransferase M"/>
    <property type="match status" value="1"/>
</dbReference>
<dbReference type="FunFam" id="3.30.70.2810:FF:000001">
    <property type="entry name" value="Ribosomal RNA large subunit methyltransferase M"/>
    <property type="match status" value="1"/>
</dbReference>
<dbReference type="FunFam" id="3.40.50.150:FF:000020">
    <property type="entry name" value="Ribosomal RNA large subunit methyltransferase M"/>
    <property type="match status" value="1"/>
</dbReference>
<dbReference type="Gene3D" id="3.30.2300.20">
    <property type="match status" value="1"/>
</dbReference>
<dbReference type="Gene3D" id="3.30.70.2810">
    <property type="match status" value="1"/>
</dbReference>
<dbReference type="Gene3D" id="3.40.50.150">
    <property type="entry name" value="Vaccinia Virus protein VP39"/>
    <property type="match status" value="1"/>
</dbReference>
<dbReference type="HAMAP" id="MF_01551">
    <property type="entry name" value="23SrRNA_methyltr_M"/>
    <property type="match status" value="1"/>
</dbReference>
<dbReference type="InterPro" id="IPR040739">
    <property type="entry name" value="RlmM_FDX"/>
</dbReference>
<dbReference type="InterPro" id="IPR048646">
    <property type="entry name" value="RlmM_THUMP-like"/>
</dbReference>
<dbReference type="InterPro" id="IPR002877">
    <property type="entry name" value="RNA_MeTrfase_FtsJ_dom"/>
</dbReference>
<dbReference type="InterPro" id="IPR011224">
    <property type="entry name" value="rRNA_MeTrfase_M"/>
</dbReference>
<dbReference type="InterPro" id="IPR029063">
    <property type="entry name" value="SAM-dependent_MTases_sf"/>
</dbReference>
<dbReference type="NCBIfam" id="NF008734">
    <property type="entry name" value="PRK11760.1"/>
    <property type="match status" value="1"/>
</dbReference>
<dbReference type="PANTHER" id="PTHR37524">
    <property type="entry name" value="RIBOSOMAL RNA LARGE SUBUNIT METHYLTRANSFERASE M"/>
    <property type="match status" value="1"/>
</dbReference>
<dbReference type="PANTHER" id="PTHR37524:SF2">
    <property type="entry name" value="RIBOSOMAL RNA METHYLTRANSFERASE FTSJ DOMAIN-CONTAINING PROTEIN"/>
    <property type="match status" value="1"/>
</dbReference>
<dbReference type="Pfam" id="PF01728">
    <property type="entry name" value="FtsJ"/>
    <property type="match status" value="1"/>
</dbReference>
<dbReference type="Pfam" id="PF18125">
    <property type="entry name" value="RlmM_FDX"/>
    <property type="match status" value="1"/>
</dbReference>
<dbReference type="Pfam" id="PF21239">
    <property type="entry name" value="RLMM_N"/>
    <property type="match status" value="1"/>
</dbReference>
<dbReference type="PIRSF" id="PIRSF028774">
    <property type="entry name" value="UCP028774"/>
    <property type="match status" value="1"/>
</dbReference>
<dbReference type="SUPFAM" id="SSF53335">
    <property type="entry name" value="S-adenosyl-L-methionine-dependent methyltransferases"/>
    <property type="match status" value="1"/>
</dbReference>
<name>RLMM_SHIBS</name>
<reference key="1">
    <citation type="journal article" date="2005" name="Nucleic Acids Res.">
        <title>Genome dynamics and diversity of Shigella species, the etiologic agents of bacillary dysentery.</title>
        <authorList>
            <person name="Yang F."/>
            <person name="Yang J."/>
            <person name="Zhang X."/>
            <person name="Chen L."/>
            <person name="Jiang Y."/>
            <person name="Yan Y."/>
            <person name="Tang X."/>
            <person name="Wang J."/>
            <person name="Xiong Z."/>
            <person name="Dong J."/>
            <person name="Xue Y."/>
            <person name="Zhu Y."/>
            <person name="Xu X."/>
            <person name="Sun L."/>
            <person name="Chen S."/>
            <person name="Nie H."/>
            <person name="Peng J."/>
            <person name="Xu J."/>
            <person name="Wang Y."/>
            <person name="Yuan Z."/>
            <person name="Wen Y."/>
            <person name="Yao Z."/>
            <person name="Shen Y."/>
            <person name="Qiang B."/>
            <person name="Hou Y."/>
            <person name="Yu J."/>
            <person name="Jin Q."/>
        </authorList>
    </citation>
    <scope>NUCLEOTIDE SEQUENCE [LARGE SCALE GENOMIC DNA]</scope>
    <source>
        <strain>Sb227</strain>
    </source>
</reference>
<evidence type="ECO:0000255" key="1">
    <source>
        <dbReference type="HAMAP-Rule" id="MF_01551"/>
    </source>
</evidence>
<feature type="chain" id="PRO_0000314544" description="Ribosomal RNA large subunit methyltransferase M">
    <location>
        <begin position="1"/>
        <end position="366"/>
    </location>
</feature>
<feature type="active site" description="Proton acceptor" evidence="1">
    <location>
        <position position="306"/>
    </location>
</feature>
<feature type="binding site" evidence="1">
    <location>
        <position position="188"/>
    </location>
    <ligand>
        <name>S-adenosyl-L-methionine</name>
        <dbReference type="ChEBI" id="CHEBI:59789"/>
    </ligand>
</feature>
<feature type="binding site" evidence="1">
    <location>
        <begin position="221"/>
        <end position="224"/>
    </location>
    <ligand>
        <name>S-adenosyl-L-methionine</name>
        <dbReference type="ChEBI" id="CHEBI:59789"/>
    </ligand>
</feature>
<feature type="binding site" evidence="1">
    <location>
        <position position="240"/>
    </location>
    <ligand>
        <name>S-adenosyl-L-methionine</name>
        <dbReference type="ChEBI" id="CHEBI:59789"/>
    </ligand>
</feature>
<feature type="binding site" evidence="1">
    <location>
        <position position="260"/>
    </location>
    <ligand>
        <name>S-adenosyl-L-methionine</name>
        <dbReference type="ChEBI" id="CHEBI:59789"/>
    </ligand>
</feature>
<feature type="binding site" evidence="1">
    <location>
        <position position="277"/>
    </location>
    <ligand>
        <name>S-adenosyl-L-methionine</name>
        <dbReference type="ChEBI" id="CHEBI:59789"/>
    </ligand>
</feature>
<proteinExistence type="inferred from homology"/>
<sequence>MNKVVLLCRPGFEKECAAEITDKAGQREIFGFARVKENSGYVIYECYQPDDGDKLIRELPFSSLIFARQWFVVGELLQHLPPEDRITPIVGMLQGVVEKGGELRVEVADTNESKELLKFCRKFTVPLRAALRDAGVLANYETPKRPVVHVFFIAPGCCYTGYSYSNNNSPFYMGIPRLKFPAEAPSRSTLKLEEAFHVFIPADEWDERLANGMWAVDLGACPGGWTYQLVKRNMWVYSVDNGPMAQSLMDTGQVTWLREDGFKFRPTRSNISWMVCDMVEKPAKVAALMAQWLVNGWCRETIFNLKLPMKKRYEEVSHNLAYIQAQLDEHGINAQIQARQLYHDREEVTVHVRRIWAAVGGRRDER</sequence>
<keyword id="KW-0963">Cytoplasm</keyword>
<keyword id="KW-0489">Methyltransferase</keyword>
<keyword id="KW-0698">rRNA processing</keyword>
<keyword id="KW-0949">S-adenosyl-L-methionine</keyword>
<keyword id="KW-0808">Transferase</keyword>
<gene>
    <name evidence="1" type="primary">rlmM</name>
    <name type="ordered locus">SBO_2689</name>
</gene>
<organism>
    <name type="scientific">Shigella boydii serotype 4 (strain Sb227)</name>
    <dbReference type="NCBI Taxonomy" id="300268"/>
    <lineage>
        <taxon>Bacteria</taxon>
        <taxon>Pseudomonadati</taxon>
        <taxon>Pseudomonadota</taxon>
        <taxon>Gammaproteobacteria</taxon>
        <taxon>Enterobacterales</taxon>
        <taxon>Enterobacteriaceae</taxon>
        <taxon>Shigella</taxon>
    </lineage>
</organism>
<accession>Q31XI5</accession>
<comment type="function">
    <text evidence="1">Catalyzes the 2'-O-methylation at nucleotide C2498 in 23S rRNA.</text>
</comment>
<comment type="catalytic activity">
    <reaction evidence="1">
        <text>cytidine(2498) in 23S rRNA + S-adenosyl-L-methionine = 2'-O-methylcytidine(2498) in 23S rRNA + S-adenosyl-L-homocysteine + H(+)</text>
        <dbReference type="Rhea" id="RHEA:42788"/>
        <dbReference type="Rhea" id="RHEA-COMP:10244"/>
        <dbReference type="Rhea" id="RHEA-COMP:10245"/>
        <dbReference type="ChEBI" id="CHEBI:15378"/>
        <dbReference type="ChEBI" id="CHEBI:57856"/>
        <dbReference type="ChEBI" id="CHEBI:59789"/>
        <dbReference type="ChEBI" id="CHEBI:74495"/>
        <dbReference type="ChEBI" id="CHEBI:82748"/>
        <dbReference type="EC" id="2.1.1.186"/>
    </reaction>
</comment>
<comment type="subunit">
    <text evidence="1">Monomer.</text>
</comment>
<comment type="subcellular location">
    <subcellularLocation>
        <location evidence="1">Cytoplasm</location>
    </subcellularLocation>
</comment>
<comment type="similarity">
    <text evidence="1">Belongs to the class I-like SAM-binding methyltransferase superfamily. RNA methyltransferase RlmE family. RlmM subfamily.</text>
</comment>